<organismHost>
    <name type="scientific">Aedes vexans</name>
    <name type="common">Inland floodwater mosquito</name>
    <name type="synonym">Culex vexans</name>
    <dbReference type="NCBI Taxonomy" id="7163"/>
</organismHost>
<organismHost>
    <name type="scientific">Culex territans</name>
    <dbReference type="NCBI Taxonomy" id="42431"/>
</organismHost>
<organismHost>
    <name type="scientific">Culiseta annulata</name>
    <dbReference type="NCBI Taxonomy" id="332058"/>
</organismHost>
<organismHost>
    <name type="scientific">Ochlerotatus sollicitans</name>
    <name type="common">eastern saltmarsh mosquito</name>
    <dbReference type="NCBI Taxonomy" id="310513"/>
</organismHost>
<organismHost>
    <name type="scientific">Ochlerotatus taeniorhynchus</name>
    <name type="common">Black salt marsh mosquito</name>
    <name type="synonym">Aedes taeniorhynchus</name>
    <dbReference type="NCBI Taxonomy" id="329105"/>
</organismHost>
<organismHost>
    <name type="scientific">Psorophora ferox</name>
    <dbReference type="NCBI Taxonomy" id="7183"/>
</organismHost>
<dbReference type="EMBL" id="DQ643392">
    <property type="protein sequence ID" value="ABF82122.1"/>
    <property type="molecule type" value="Genomic_DNA"/>
</dbReference>
<dbReference type="RefSeq" id="YP_654664.1">
    <property type="nucleotide sequence ID" value="NC_008187.1"/>
</dbReference>
<dbReference type="SMR" id="Q196W8"/>
<dbReference type="KEGG" id="vg:4156236"/>
<dbReference type="OrthoDB" id="16003at10239"/>
<dbReference type="Proteomes" id="UP000001358">
    <property type="component" value="Genome"/>
</dbReference>
<dbReference type="InterPro" id="IPR035913">
    <property type="entry name" value="RPB5-like_sf"/>
</dbReference>
<dbReference type="SUPFAM" id="SSF55287">
    <property type="entry name" value="RPB5-like RNA polymerase subunit"/>
    <property type="match status" value="1"/>
</dbReference>
<sequence>MKIDVVREMMAQRGFEEYKIRPEYMVGVNRETNDYIYIKIFPGKFELNTVREFLARQFYPIIDPDEKIVTKKTFKHIVQLVIISKTFQNSHFKEFREISRRIQLIRSDFFNINITTKAPRHERVPKDYIKNRFEIPIIKETDPNCIFYNFVKDDVIRVTRSDGDICYRLVK</sequence>
<reference key="1">
    <citation type="journal article" date="2006" name="J. Virol.">
        <title>Genome of invertebrate iridescent virus type 3 (mosquito iridescent virus).</title>
        <authorList>
            <person name="Delhon G."/>
            <person name="Tulman E.R."/>
            <person name="Afonso C.L."/>
            <person name="Lu Z."/>
            <person name="Becnel J.J."/>
            <person name="Moser B.A."/>
            <person name="Kutish G.F."/>
            <person name="Rock D.L."/>
        </authorList>
    </citation>
    <scope>NUCLEOTIDE SEQUENCE [LARGE SCALE GENOMIC DNA]</scope>
</reference>
<protein>
    <recommendedName>
        <fullName>Uncharacterized protein 092R</fullName>
    </recommendedName>
</protein>
<accession>Q196W8</accession>
<keyword id="KW-1185">Reference proteome</keyword>
<name>092R_IIV3</name>
<feature type="chain" id="PRO_0000377809" description="Uncharacterized protein 092R">
    <location>
        <begin position="1"/>
        <end position="171"/>
    </location>
</feature>
<gene>
    <name type="ORF">IIV3-092R</name>
</gene>
<proteinExistence type="predicted"/>
<organism>
    <name type="scientific">Invertebrate iridescent virus 3</name>
    <name type="common">IIV-3</name>
    <name type="synonym">Mosquito iridescent virus</name>
    <dbReference type="NCBI Taxonomy" id="345201"/>
    <lineage>
        <taxon>Viruses</taxon>
        <taxon>Varidnaviria</taxon>
        <taxon>Bamfordvirae</taxon>
        <taxon>Nucleocytoviricota</taxon>
        <taxon>Megaviricetes</taxon>
        <taxon>Pimascovirales</taxon>
        <taxon>Iridoviridae</taxon>
        <taxon>Betairidovirinae</taxon>
        <taxon>Chloriridovirus</taxon>
    </lineage>
</organism>